<evidence type="ECO:0000255" key="1"/>
<evidence type="ECO:0000255" key="2">
    <source>
        <dbReference type="PROSITE-ProRule" id="PRU00108"/>
    </source>
</evidence>
<evidence type="ECO:0000255" key="3">
    <source>
        <dbReference type="PROSITE-ProRule" id="PRU00197"/>
    </source>
</evidence>
<evidence type="ECO:0000256" key="4">
    <source>
        <dbReference type="SAM" id="MobiDB-lite"/>
    </source>
</evidence>
<evidence type="ECO:0000269" key="5">
    <source>
    </source>
</evidence>
<evidence type="ECO:0000305" key="6"/>
<reference key="1">
    <citation type="journal article" date="1997" name="DNA Res.">
        <title>Structural analysis of Arabidopsis thaliana chromosome 5. I. Sequence features of the 1.6 Mb regions covered by twenty physically assigned P1 clones.</title>
        <authorList>
            <person name="Sato S."/>
            <person name="Kotani H."/>
            <person name="Nakamura Y."/>
            <person name="Kaneko T."/>
            <person name="Asamizu E."/>
            <person name="Fukami M."/>
            <person name="Miyajima N."/>
            <person name="Tabata S."/>
        </authorList>
    </citation>
    <scope>NUCLEOTIDE SEQUENCE [LARGE SCALE GENOMIC DNA]</scope>
    <source>
        <strain>cv. Columbia</strain>
    </source>
</reference>
<reference key="2">
    <citation type="journal article" date="2017" name="Plant J.">
        <title>Araport11: a complete reannotation of the Arabidopsis thaliana reference genome.</title>
        <authorList>
            <person name="Cheng C.Y."/>
            <person name="Krishnakumar V."/>
            <person name="Chan A.P."/>
            <person name="Thibaud-Nissen F."/>
            <person name="Schobel S."/>
            <person name="Town C.D."/>
        </authorList>
    </citation>
    <scope>GENOME REANNOTATION</scope>
    <source>
        <strain>cv. Columbia</strain>
    </source>
</reference>
<reference key="3">
    <citation type="journal article" date="2000" name="Plant Mol. Biol.">
        <title>Organization and structural evolution of four multigene families in Arabidopsis thaliana: AtLCAD, AtLGT, AtMYST and AtHD-GL2.</title>
        <authorList>
            <person name="Tavares R."/>
            <person name="Aubourg S."/>
            <person name="Lecharny A."/>
            <person name="Kreis M."/>
        </authorList>
    </citation>
    <scope>GENE FAMILY</scope>
</reference>
<reference key="4">
    <citation type="journal article" date="2006" name="Plant Physiol.">
        <title>Characterization of the class IV homeodomain-leucine zipper gene family in Arabidopsis.</title>
        <authorList>
            <person name="Nakamura M."/>
            <person name="Katsumata H."/>
            <person name="Abe M."/>
            <person name="Yabe N."/>
            <person name="Komeda Y."/>
            <person name="Yamamoto K.T."/>
            <person name="Takahashi T."/>
        </authorList>
    </citation>
    <scope>FUNCTION</scope>
    <scope>TISSUE SPECIFICITY</scope>
    <scope>GENE FAMILY</scope>
    <scope>NOMENCLATURE</scope>
</reference>
<comment type="function">
    <text evidence="5">Probable transcription factor that binds to the DNA sequence 5'-GCATTAAATGCGCA-3'.</text>
</comment>
<comment type="subcellular location">
    <subcellularLocation>
        <location evidence="6">Nucleus</location>
    </subcellularLocation>
</comment>
<comment type="tissue specificity">
    <text evidence="5">Expressed in anthers with highest levels in the tapetum and pollen grains, and chalazal end of the embryo sac.</text>
</comment>
<comment type="similarity">
    <text evidence="6">Belongs to the HD-ZIP homeobox family. Class IV subfamily.</text>
</comment>
<proteinExistence type="evidence at transcript level"/>
<gene>
    <name type="primary">HDG9</name>
    <name type="synonym">HDGL2-9</name>
    <name type="ordered locus">At5g17320</name>
    <name type="ORF">MKP11.28</name>
</gene>
<organism>
    <name type="scientific">Arabidopsis thaliana</name>
    <name type="common">Mouse-ear cress</name>
    <dbReference type="NCBI Taxonomy" id="3702"/>
    <lineage>
        <taxon>Eukaryota</taxon>
        <taxon>Viridiplantae</taxon>
        <taxon>Streptophyta</taxon>
        <taxon>Embryophyta</taxon>
        <taxon>Tracheophyta</taxon>
        <taxon>Spermatophyta</taxon>
        <taxon>Magnoliopsida</taxon>
        <taxon>eudicotyledons</taxon>
        <taxon>Gunneridae</taxon>
        <taxon>Pentapetalae</taxon>
        <taxon>rosids</taxon>
        <taxon>malvids</taxon>
        <taxon>Brassicales</taxon>
        <taxon>Brassicaceae</taxon>
        <taxon>Camelineae</taxon>
        <taxon>Arabidopsis</taxon>
    </lineage>
</organism>
<name>HDG9_ARATH</name>
<feature type="chain" id="PRO_0000331670" description="Homeobox-leucine zipper protein HDG9">
    <location>
        <begin position="1"/>
        <end position="718"/>
    </location>
</feature>
<feature type="domain" description="START" evidence="3">
    <location>
        <begin position="232"/>
        <end position="464"/>
    </location>
</feature>
<feature type="DNA-binding region" description="Homeobox" evidence="2">
    <location>
        <begin position="26"/>
        <end position="85"/>
    </location>
</feature>
<feature type="region of interest" description="Disordered" evidence="4">
    <location>
        <begin position="1"/>
        <end position="35"/>
    </location>
</feature>
<feature type="region of interest" description="Disordered" evidence="4">
    <location>
        <begin position="169"/>
        <end position="209"/>
    </location>
</feature>
<feature type="coiled-coil region" evidence="1">
    <location>
        <begin position="78"/>
        <end position="152"/>
    </location>
</feature>
<feature type="compositionally biased region" description="Basic and acidic residues" evidence="4">
    <location>
        <begin position="1"/>
        <end position="12"/>
    </location>
</feature>
<feature type="compositionally biased region" description="Polar residues" evidence="4">
    <location>
        <begin position="176"/>
        <end position="194"/>
    </location>
</feature>
<keyword id="KW-0175">Coiled coil</keyword>
<keyword id="KW-0238">DNA-binding</keyword>
<keyword id="KW-0371">Homeobox</keyword>
<keyword id="KW-0539">Nucleus</keyword>
<keyword id="KW-1185">Reference proteome</keyword>
<keyword id="KW-0804">Transcription</keyword>
<keyword id="KW-0805">Transcription regulation</keyword>
<accession>Q9FFI0</accession>
<dbReference type="EMBL" id="AB005238">
    <property type="protein sequence ID" value="BAB10519.1"/>
    <property type="molecule type" value="Genomic_DNA"/>
</dbReference>
<dbReference type="EMBL" id="CP002688">
    <property type="protein sequence ID" value="AED92413.1"/>
    <property type="molecule type" value="Genomic_DNA"/>
</dbReference>
<dbReference type="RefSeq" id="NP_197234.1">
    <property type="nucleotide sequence ID" value="NM_121738.2"/>
</dbReference>
<dbReference type="SMR" id="Q9FFI0"/>
<dbReference type="FunCoup" id="Q9FFI0">
    <property type="interactions" value="7"/>
</dbReference>
<dbReference type="STRING" id="3702.Q9FFI0"/>
<dbReference type="PaxDb" id="3702-AT5G17320.1"/>
<dbReference type="ProteomicsDB" id="230315"/>
<dbReference type="EnsemblPlants" id="AT5G17320.1">
    <property type="protein sequence ID" value="AT5G17320.1"/>
    <property type="gene ID" value="AT5G17320"/>
</dbReference>
<dbReference type="GeneID" id="831598"/>
<dbReference type="Gramene" id="AT5G17320.1">
    <property type="protein sequence ID" value="AT5G17320.1"/>
    <property type="gene ID" value="AT5G17320"/>
</dbReference>
<dbReference type="KEGG" id="ath:AT5G17320"/>
<dbReference type="Araport" id="AT5G17320"/>
<dbReference type="TAIR" id="AT5G17320">
    <property type="gene designation" value="HDG9"/>
</dbReference>
<dbReference type="eggNOG" id="ENOG502QTNV">
    <property type="taxonomic scope" value="Eukaryota"/>
</dbReference>
<dbReference type="HOGENOM" id="CLU_015002_2_1_1"/>
<dbReference type="InParanoid" id="Q9FFI0"/>
<dbReference type="OMA" id="EREQYTH"/>
<dbReference type="PhylomeDB" id="Q9FFI0"/>
<dbReference type="PRO" id="PR:Q9FFI0"/>
<dbReference type="Proteomes" id="UP000006548">
    <property type="component" value="Chromosome 5"/>
</dbReference>
<dbReference type="ExpressionAtlas" id="Q9FFI0">
    <property type="expression patterns" value="baseline and differential"/>
</dbReference>
<dbReference type="GO" id="GO:0005634">
    <property type="term" value="C:nucleus"/>
    <property type="evidence" value="ECO:0007669"/>
    <property type="project" value="UniProtKB-SubCell"/>
</dbReference>
<dbReference type="GO" id="GO:0003700">
    <property type="term" value="F:DNA-binding transcription factor activity"/>
    <property type="evidence" value="ECO:0000250"/>
    <property type="project" value="TAIR"/>
</dbReference>
<dbReference type="GO" id="GO:0008289">
    <property type="term" value="F:lipid binding"/>
    <property type="evidence" value="ECO:0007669"/>
    <property type="project" value="InterPro"/>
</dbReference>
<dbReference type="GO" id="GO:0043565">
    <property type="term" value="F:sequence-specific DNA binding"/>
    <property type="evidence" value="ECO:0000314"/>
    <property type="project" value="TAIR"/>
</dbReference>
<dbReference type="CDD" id="cd00086">
    <property type="entry name" value="homeodomain"/>
    <property type="match status" value="1"/>
</dbReference>
<dbReference type="CDD" id="cd08875">
    <property type="entry name" value="START_ArGLABRA2_like"/>
    <property type="match status" value="1"/>
</dbReference>
<dbReference type="FunFam" id="1.10.10.60:FF:000229">
    <property type="entry name" value="Homeobox-leucine zipper protein HDG1"/>
    <property type="match status" value="1"/>
</dbReference>
<dbReference type="Gene3D" id="3.30.530.20">
    <property type="match status" value="1"/>
</dbReference>
<dbReference type="Gene3D" id="1.10.10.60">
    <property type="entry name" value="Homeodomain-like"/>
    <property type="match status" value="1"/>
</dbReference>
<dbReference type="InterPro" id="IPR042160">
    <property type="entry name" value="GLABRA2/ANL2/PDF2/ATML1-like"/>
</dbReference>
<dbReference type="InterPro" id="IPR001356">
    <property type="entry name" value="HD"/>
</dbReference>
<dbReference type="InterPro" id="IPR009057">
    <property type="entry name" value="Homeodomain-like_sf"/>
</dbReference>
<dbReference type="InterPro" id="IPR023393">
    <property type="entry name" value="START-like_dom_sf"/>
</dbReference>
<dbReference type="InterPro" id="IPR002913">
    <property type="entry name" value="START_lipid-bd_dom"/>
</dbReference>
<dbReference type="PANTHER" id="PTHR45654:SF9">
    <property type="entry name" value="HOMEOBOX-LEUCINE ZIPPER PROTEIN HDG10-RELATED"/>
    <property type="match status" value="1"/>
</dbReference>
<dbReference type="PANTHER" id="PTHR45654">
    <property type="entry name" value="HOMEOBOX-LEUCINE ZIPPER PROTEIN MERISTEM L1"/>
    <property type="match status" value="1"/>
</dbReference>
<dbReference type="Pfam" id="PF00046">
    <property type="entry name" value="Homeodomain"/>
    <property type="match status" value="1"/>
</dbReference>
<dbReference type="Pfam" id="PF01852">
    <property type="entry name" value="START"/>
    <property type="match status" value="1"/>
</dbReference>
<dbReference type="SMART" id="SM00389">
    <property type="entry name" value="HOX"/>
    <property type="match status" value="1"/>
</dbReference>
<dbReference type="SMART" id="SM00234">
    <property type="entry name" value="START"/>
    <property type="match status" value="1"/>
</dbReference>
<dbReference type="SUPFAM" id="SSF55961">
    <property type="entry name" value="Bet v1-like"/>
    <property type="match status" value="2"/>
</dbReference>
<dbReference type="SUPFAM" id="SSF46689">
    <property type="entry name" value="Homeodomain-like"/>
    <property type="match status" value="1"/>
</dbReference>
<dbReference type="PROSITE" id="PS50071">
    <property type="entry name" value="HOMEOBOX_2"/>
    <property type="match status" value="1"/>
</dbReference>
<dbReference type="PROSITE" id="PS50848">
    <property type="entry name" value="START"/>
    <property type="match status" value="1"/>
</dbReference>
<sequence>MDFTRDDNSSDERENDVDANTNNRHEKKGYHRHTNEQIHRLETYFKECPHPDEFQRRLLGEELNLKPKQIKFWFQNKRTQAKSHNEKADNAALRAENIKIRRENESMEDALNNVVCPPCGGRGPGREDQLRHLQKLRAQNAYLKDEYERVSNYLKQYGGHSMHNVEATPYLHGPSNHASTSKNRPALYGTSSNRLPEPSSIFRGPYTRGNMNTTAPPQPRKPLEMQNFQPLSQLEKIAMLEAAEKAVSEVLSLIQMDDTMWKKSSIDDRLVIDPGLYEKYFTKTNTNGRPESSKDVVVVQMDAGNLIDIFLTAEKWARLFPTIVNEAKTIHVLDSVDHRGKTFSRVIYEQLHILSPLVPPREFMILRTCQQIEDNVWMIADVSCHLPNIEFDLSFPICTKRPSGVLIQALPHGFSKVTWIEHVVVNDNRVRPHKLYRDLLYGGFGYGARRWTVTLERTCERLIFSTSVPALPNNDNPGVVQTIRGRNSVMHLGERMLRNFAWMMKMVNKLDFSPQSETNNSGIRIGVRINNEAGQPPGLIVCAGSSLSLPLPPVQVYDFLKNLEVRHQWDVLCHGNPATEAARFVTGSNPRNTVSFLEPSIRDINTKLMILQDSFKDALGGMVAYAPMDLNTACAAISGDIDPTTIPILPSGFMISRDGRPSEGEAEGGSYTLLTVAFQILVSGPSYSPDTNLEVSATTVNTLISSTVQRIKAMLKCE</sequence>
<protein>
    <recommendedName>
        <fullName>Homeobox-leucine zipper protein HDG9</fullName>
    </recommendedName>
    <alternativeName>
        <fullName>HD-ZIP protein HDG9</fullName>
    </alternativeName>
    <alternativeName>
        <fullName>Homeodomain GLABRA 2-like protein 9</fullName>
    </alternativeName>
    <alternativeName>
        <fullName>Homeodomain transcription factor HDG9</fullName>
    </alternativeName>
    <alternativeName>
        <fullName>Protein HOMEODOMAIN GLABROUS 9</fullName>
    </alternativeName>
</protein>